<reference key="1">
    <citation type="submission" date="2008-02" db="EMBL/GenBank/DDBJ databases">
        <title>Genome sequence of Ureaplasma parvum serovar 3.</title>
        <authorList>
            <person name="Methe B.A."/>
            <person name="Glass J."/>
            <person name="Waites K."/>
            <person name="Shrivastava S."/>
        </authorList>
    </citation>
    <scope>NUCLEOTIDE SEQUENCE [LARGE SCALE GENOMIC DNA]</scope>
    <source>
        <strain>ATCC 27815 / 27 / NCTC 11736</strain>
    </source>
</reference>
<keyword id="KW-0067">ATP-binding</keyword>
<keyword id="KW-0963">Cytoplasm</keyword>
<keyword id="KW-0227">DNA damage</keyword>
<keyword id="KW-0228">DNA excision</keyword>
<keyword id="KW-0234">DNA repair</keyword>
<keyword id="KW-0267">Excision nuclease</keyword>
<keyword id="KW-0347">Helicase</keyword>
<keyword id="KW-0378">Hydrolase</keyword>
<keyword id="KW-0547">Nucleotide-binding</keyword>
<keyword id="KW-0742">SOS response</keyword>
<feature type="chain" id="PRO_1000099576" description="UvrABC system protein B">
    <location>
        <begin position="1"/>
        <end position="666"/>
    </location>
</feature>
<feature type="domain" description="Helicase ATP-binding" evidence="1">
    <location>
        <begin position="28"/>
        <end position="171"/>
    </location>
</feature>
<feature type="domain" description="Helicase C-terminal" evidence="1">
    <location>
        <begin position="436"/>
        <end position="598"/>
    </location>
</feature>
<feature type="domain" description="UVR" evidence="1">
    <location>
        <begin position="624"/>
        <end position="659"/>
    </location>
</feature>
<feature type="short sequence motif" description="Beta-hairpin">
    <location>
        <begin position="94"/>
        <end position="117"/>
    </location>
</feature>
<feature type="binding site" evidence="1">
    <location>
        <begin position="41"/>
        <end position="48"/>
    </location>
    <ligand>
        <name>ATP</name>
        <dbReference type="ChEBI" id="CHEBI:30616"/>
    </ligand>
</feature>
<dbReference type="EMBL" id="CP000942">
    <property type="protein sequence ID" value="ACA33137.1"/>
    <property type="molecule type" value="Genomic_DNA"/>
</dbReference>
<dbReference type="RefSeq" id="WP_006688958.1">
    <property type="nucleotide sequence ID" value="NC_010503.1"/>
</dbReference>
<dbReference type="SMR" id="B1AIA9"/>
<dbReference type="GeneID" id="29672290"/>
<dbReference type="KEGG" id="upa:UPA3_0126"/>
<dbReference type="HOGENOM" id="CLU_009621_2_1_14"/>
<dbReference type="Proteomes" id="UP000002162">
    <property type="component" value="Chromosome"/>
</dbReference>
<dbReference type="GO" id="GO:0005737">
    <property type="term" value="C:cytoplasm"/>
    <property type="evidence" value="ECO:0007669"/>
    <property type="project" value="UniProtKB-SubCell"/>
</dbReference>
<dbReference type="GO" id="GO:0009380">
    <property type="term" value="C:excinuclease repair complex"/>
    <property type="evidence" value="ECO:0007669"/>
    <property type="project" value="InterPro"/>
</dbReference>
<dbReference type="GO" id="GO:0005524">
    <property type="term" value="F:ATP binding"/>
    <property type="evidence" value="ECO:0007669"/>
    <property type="project" value="UniProtKB-UniRule"/>
</dbReference>
<dbReference type="GO" id="GO:0016887">
    <property type="term" value="F:ATP hydrolysis activity"/>
    <property type="evidence" value="ECO:0007669"/>
    <property type="project" value="InterPro"/>
</dbReference>
<dbReference type="GO" id="GO:0003677">
    <property type="term" value="F:DNA binding"/>
    <property type="evidence" value="ECO:0007669"/>
    <property type="project" value="UniProtKB-UniRule"/>
</dbReference>
<dbReference type="GO" id="GO:0009381">
    <property type="term" value="F:excinuclease ABC activity"/>
    <property type="evidence" value="ECO:0007669"/>
    <property type="project" value="UniProtKB-UniRule"/>
</dbReference>
<dbReference type="GO" id="GO:0004386">
    <property type="term" value="F:helicase activity"/>
    <property type="evidence" value="ECO:0007669"/>
    <property type="project" value="UniProtKB-KW"/>
</dbReference>
<dbReference type="GO" id="GO:0006289">
    <property type="term" value="P:nucleotide-excision repair"/>
    <property type="evidence" value="ECO:0007669"/>
    <property type="project" value="UniProtKB-UniRule"/>
</dbReference>
<dbReference type="GO" id="GO:0009432">
    <property type="term" value="P:SOS response"/>
    <property type="evidence" value="ECO:0007669"/>
    <property type="project" value="UniProtKB-UniRule"/>
</dbReference>
<dbReference type="CDD" id="cd17916">
    <property type="entry name" value="DEXHc_UvrB"/>
    <property type="match status" value="1"/>
</dbReference>
<dbReference type="Gene3D" id="3.40.50.300">
    <property type="entry name" value="P-loop containing nucleotide triphosphate hydrolases"/>
    <property type="match status" value="3"/>
</dbReference>
<dbReference type="Gene3D" id="4.10.860.10">
    <property type="entry name" value="UVR domain"/>
    <property type="match status" value="1"/>
</dbReference>
<dbReference type="HAMAP" id="MF_00204">
    <property type="entry name" value="UvrB"/>
    <property type="match status" value="1"/>
</dbReference>
<dbReference type="InterPro" id="IPR006935">
    <property type="entry name" value="Helicase/UvrB_N"/>
</dbReference>
<dbReference type="InterPro" id="IPR014001">
    <property type="entry name" value="Helicase_ATP-bd"/>
</dbReference>
<dbReference type="InterPro" id="IPR001650">
    <property type="entry name" value="Helicase_C-like"/>
</dbReference>
<dbReference type="InterPro" id="IPR027417">
    <property type="entry name" value="P-loop_NTPase"/>
</dbReference>
<dbReference type="InterPro" id="IPR001943">
    <property type="entry name" value="UVR_dom"/>
</dbReference>
<dbReference type="InterPro" id="IPR036876">
    <property type="entry name" value="UVR_dom_sf"/>
</dbReference>
<dbReference type="InterPro" id="IPR004807">
    <property type="entry name" value="UvrB"/>
</dbReference>
<dbReference type="InterPro" id="IPR041471">
    <property type="entry name" value="UvrB_inter"/>
</dbReference>
<dbReference type="InterPro" id="IPR024759">
    <property type="entry name" value="UvrB_YAD/RRR_dom"/>
</dbReference>
<dbReference type="NCBIfam" id="NF003673">
    <property type="entry name" value="PRK05298.1"/>
    <property type="match status" value="1"/>
</dbReference>
<dbReference type="NCBIfam" id="TIGR00631">
    <property type="entry name" value="uvrb"/>
    <property type="match status" value="1"/>
</dbReference>
<dbReference type="PANTHER" id="PTHR24029">
    <property type="entry name" value="UVRABC SYSTEM PROTEIN B"/>
    <property type="match status" value="1"/>
</dbReference>
<dbReference type="PANTHER" id="PTHR24029:SF0">
    <property type="entry name" value="UVRABC SYSTEM PROTEIN B"/>
    <property type="match status" value="1"/>
</dbReference>
<dbReference type="Pfam" id="PF00271">
    <property type="entry name" value="Helicase_C"/>
    <property type="match status" value="1"/>
</dbReference>
<dbReference type="Pfam" id="PF04851">
    <property type="entry name" value="ResIII"/>
    <property type="match status" value="1"/>
</dbReference>
<dbReference type="Pfam" id="PF02151">
    <property type="entry name" value="UVR"/>
    <property type="match status" value="1"/>
</dbReference>
<dbReference type="Pfam" id="PF12344">
    <property type="entry name" value="UvrB"/>
    <property type="match status" value="1"/>
</dbReference>
<dbReference type="Pfam" id="PF17757">
    <property type="entry name" value="UvrB_inter"/>
    <property type="match status" value="1"/>
</dbReference>
<dbReference type="SMART" id="SM00487">
    <property type="entry name" value="DEXDc"/>
    <property type="match status" value="1"/>
</dbReference>
<dbReference type="SMART" id="SM00490">
    <property type="entry name" value="HELICc"/>
    <property type="match status" value="1"/>
</dbReference>
<dbReference type="SUPFAM" id="SSF46600">
    <property type="entry name" value="C-terminal UvrC-binding domain of UvrB"/>
    <property type="match status" value="1"/>
</dbReference>
<dbReference type="SUPFAM" id="SSF52540">
    <property type="entry name" value="P-loop containing nucleoside triphosphate hydrolases"/>
    <property type="match status" value="2"/>
</dbReference>
<dbReference type="PROSITE" id="PS51192">
    <property type="entry name" value="HELICASE_ATP_BIND_1"/>
    <property type="match status" value="1"/>
</dbReference>
<dbReference type="PROSITE" id="PS51194">
    <property type="entry name" value="HELICASE_CTER"/>
    <property type="match status" value="1"/>
</dbReference>
<dbReference type="PROSITE" id="PS50151">
    <property type="entry name" value="UVR"/>
    <property type="match status" value="1"/>
</dbReference>
<gene>
    <name evidence="1" type="primary">uvrB</name>
    <name type="ordered locus">UPA3_0126</name>
</gene>
<proteinExistence type="inferred from homology"/>
<organism>
    <name type="scientific">Ureaplasma parvum serovar 3 (strain ATCC 27815 / 27 / NCTC 11736)</name>
    <dbReference type="NCBI Taxonomy" id="505682"/>
    <lineage>
        <taxon>Bacteria</taxon>
        <taxon>Bacillati</taxon>
        <taxon>Mycoplasmatota</taxon>
        <taxon>Mycoplasmoidales</taxon>
        <taxon>Mycoplasmoidaceae</taxon>
        <taxon>Ureaplasma</taxon>
    </lineage>
</organism>
<comment type="function">
    <text evidence="1">The UvrABC repair system catalyzes the recognition and processing of DNA lesions. A damage recognition complex composed of 2 UvrA and 2 UvrB subunits scans DNA for abnormalities. Upon binding of the UvrA(2)B(2) complex to a putative damaged site, the DNA wraps around one UvrB monomer. DNA wrap is dependent on ATP binding by UvrB and probably causes local melting of the DNA helix, facilitating insertion of UvrB beta-hairpin between the DNA strands. Then UvrB probes one DNA strand for the presence of a lesion. If a lesion is found the UvrA subunits dissociate and the UvrB-DNA preincision complex is formed. This complex is subsequently bound by UvrC and the second UvrB is released. If no lesion is found, the DNA wraps around the other UvrB subunit that will check the other stand for damage.</text>
</comment>
<comment type="subunit">
    <text evidence="1">Forms a heterotetramer with UvrA during the search for lesions. Interacts with UvrC in an incision complex.</text>
</comment>
<comment type="subcellular location">
    <subcellularLocation>
        <location evidence="1">Cytoplasm</location>
    </subcellularLocation>
</comment>
<comment type="domain">
    <text evidence="1">The beta-hairpin motif is involved in DNA binding.</text>
</comment>
<comment type="similarity">
    <text evidence="1">Belongs to the UvrB family.</text>
</comment>
<accession>B1AIA9</accession>
<protein>
    <recommendedName>
        <fullName evidence="1">UvrABC system protein B</fullName>
        <shortName evidence="1">Protein UvrB</shortName>
    </recommendedName>
    <alternativeName>
        <fullName evidence="1">Excinuclease ABC subunit B</fullName>
    </alternativeName>
</protein>
<sequence>MDDFKKFELISDYKPAGDQQKAIDEMVNNINQGIQRQVLLGATGTGKTFSVANVIAKTQLKTLVLAHNKTLAAQLFAELKEMFPHNKVEYFVSYFDYYQPEAYKPITDTYIEKDSVTNAEIEMMRLSTINSLATRNDVIVVASVACIYASVSPIEFTKKNLYLHVGELIEFEQIKYKLVQLGYERKDYDLVPGTFRIRGDLIEIMSGYSDKFKIRISMFGNEVESIDLCDPITNNIISKEQRFILRSASEYIFDDSRLAIAIENIKNELDERVKFFLKNNQLIEAQRIEQRTKQDLESIVEFGFCSGVENYYRHLEHREPFQTPWTIFDFFSYNNQDWLLIVDESHISLPQVKGMHNTDRSRKQTLVEYGFRLPSALDNRPLNYDEFNKKLSKTIYVSATPNDEEIALSDNHIVSQIVRPTGLLDPIIEIRKTEHQIDDLINELMLLKNKNQRAFITVMTIRMAEDLTNYLNNTKIKAAYLHNELKTLERSVIINKLRKGIYDCVVGINLLREGLDVPEVAGVFIFDADKPGFFRSDKSLIQIIGRAARNADGKVIMYADVITQAMQTAINETKRRREIQLAFNLKHNIIPKTIIKPIHEDLSGHDYKQNAELYAAKASKNEYNQKIKELKKKMEEAAKKREYEVAAQYRDMIVELEAIKQSVKSK</sequence>
<name>UVRB_UREP2</name>
<evidence type="ECO:0000255" key="1">
    <source>
        <dbReference type="HAMAP-Rule" id="MF_00204"/>
    </source>
</evidence>